<feature type="chain" id="PRO_0000260608" description="Ribosomal RNA large subunit methyltransferase H">
    <location>
        <begin position="1"/>
        <end position="155"/>
    </location>
</feature>
<feature type="binding site" evidence="1">
    <location>
        <position position="72"/>
    </location>
    <ligand>
        <name>S-adenosyl-L-methionine</name>
        <dbReference type="ChEBI" id="CHEBI:59789"/>
    </ligand>
</feature>
<feature type="binding site" evidence="1">
    <location>
        <position position="103"/>
    </location>
    <ligand>
        <name>S-adenosyl-L-methionine</name>
        <dbReference type="ChEBI" id="CHEBI:59789"/>
    </ligand>
</feature>
<feature type="binding site" evidence="1">
    <location>
        <begin position="122"/>
        <end position="127"/>
    </location>
    <ligand>
        <name>S-adenosyl-L-methionine</name>
        <dbReference type="ChEBI" id="CHEBI:59789"/>
    </ligand>
</feature>
<reference key="1">
    <citation type="journal article" date="2005" name="Nucleic Acids Res.">
        <title>Genome dynamics and diversity of Shigella species, the etiologic agents of bacillary dysentery.</title>
        <authorList>
            <person name="Yang F."/>
            <person name="Yang J."/>
            <person name="Zhang X."/>
            <person name="Chen L."/>
            <person name="Jiang Y."/>
            <person name="Yan Y."/>
            <person name="Tang X."/>
            <person name="Wang J."/>
            <person name="Xiong Z."/>
            <person name="Dong J."/>
            <person name="Xue Y."/>
            <person name="Zhu Y."/>
            <person name="Xu X."/>
            <person name="Sun L."/>
            <person name="Chen S."/>
            <person name="Nie H."/>
            <person name="Peng J."/>
            <person name="Xu J."/>
            <person name="Wang Y."/>
            <person name="Yuan Z."/>
            <person name="Wen Y."/>
            <person name="Yao Z."/>
            <person name="Shen Y."/>
            <person name="Qiang B."/>
            <person name="Hou Y."/>
            <person name="Yu J."/>
            <person name="Jin Q."/>
        </authorList>
    </citation>
    <scope>NUCLEOTIDE SEQUENCE [LARGE SCALE GENOMIC DNA]</scope>
    <source>
        <strain>Sb227</strain>
    </source>
</reference>
<keyword id="KW-0963">Cytoplasm</keyword>
<keyword id="KW-0489">Methyltransferase</keyword>
<keyword id="KW-0698">rRNA processing</keyword>
<keyword id="KW-0949">S-adenosyl-L-methionine</keyword>
<keyword id="KW-0808">Transferase</keyword>
<gene>
    <name evidence="1" type="primary">rlmH</name>
    <name type="ordered locus">SBO_0500</name>
</gene>
<accession>Q324Q7</accession>
<comment type="function">
    <text evidence="1">Specifically methylates the pseudouridine at position 1915 (m3Psi1915) in 23S rRNA.</text>
</comment>
<comment type="catalytic activity">
    <reaction evidence="1">
        <text>pseudouridine(1915) in 23S rRNA + S-adenosyl-L-methionine = N(3)-methylpseudouridine(1915) in 23S rRNA + S-adenosyl-L-homocysteine + H(+)</text>
        <dbReference type="Rhea" id="RHEA:42752"/>
        <dbReference type="Rhea" id="RHEA-COMP:10221"/>
        <dbReference type="Rhea" id="RHEA-COMP:10222"/>
        <dbReference type="ChEBI" id="CHEBI:15378"/>
        <dbReference type="ChEBI" id="CHEBI:57856"/>
        <dbReference type="ChEBI" id="CHEBI:59789"/>
        <dbReference type="ChEBI" id="CHEBI:65314"/>
        <dbReference type="ChEBI" id="CHEBI:74486"/>
        <dbReference type="EC" id="2.1.1.177"/>
    </reaction>
</comment>
<comment type="subunit">
    <text evidence="1">Homodimer.</text>
</comment>
<comment type="subcellular location">
    <subcellularLocation>
        <location evidence="1">Cytoplasm</location>
    </subcellularLocation>
</comment>
<comment type="similarity">
    <text evidence="1">Belongs to the RNA methyltransferase RlmH family.</text>
</comment>
<dbReference type="EC" id="2.1.1.177" evidence="1"/>
<dbReference type="EMBL" id="CP000036">
    <property type="protein sequence ID" value="ABB65201.1"/>
    <property type="molecule type" value="Genomic_DNA"/>
</dbReference>
<dbReference type="RefSeq" id="WP_000776104.1">
    <property type="nucleotide sequence ID" value="NC_007613.1"/>
</dbReference>
<dbReference type="SMR" id="Q324Q7"/>
<dbReference type="GeneID" id="93776846"/>
<dbReference type="KEGG" id="sbo:SBO_0500"/>
<dbReference type="HOGENOM" id="CLU_100552_1_0_6"/>
<dbReference type="Proteomes" id="UP000007067">
    <property type="component" value="Chromosome"/>
</dbReference>
<dbReference type="GO" id="GO:0005737">
    <property type="term" value="C:cytoplasm"/>
    <property type="evidence" value="ECO:0007669"/>
    <property type="project" value="UniProtKB-SubCell"/>
</dbReference>
<dbReference type="GO" id="GO:0070038">
    <property type="term" value="F:rRNA (pseudouridine-N3-)-methyltransferase activity"/>
    <property type="evidence" value="ECO:0007669"/>
    <property type="project" value="UniProtKB-UniRule"/>
</dbReference>
<dbReference type="CDD" id="cd18081">
    <property type="entry name" value="RlmH-like"/>
    <property type="match status" value="1"/>
</dbReference>
<dbReference type="FunFam" id="3.40.1280.10:FF:000004">
    <property type="entry name" value="Ribosomal RNA large subunit methyltransferase H"/>
    <property type="match status" value="1"/>
</dbReference>
<dbReference type="Gene3D" id="3.40.1280.10">
    <property type="match status" value="1"/>
</dbReference>
<dbReference type="HAMAP" id="MF_00658">
    <property type="entry name" value="23SrRNA_methyltr_H"/>
    <property type="match status" value="1"/>
</dbReference>
<dbReference type="InterPro" id="IPR029028">
    <property type="entry name" value="Alpha/beta_knot_MTases"/>
</dbReference>
<dbReference type="InterPro" id="IPR003742">
    <property type="entry name" value="RlmH-like"/>
</dbReference>
<dbReference type="InterPro" id="IPR029026">
    <property type="entry name" value="tRNA_m1G_MTases_N"/>
</dbReference>
<dbReference type="NCBIfam" id="NF000984">
    <property type="entry name" value="PRK00103.1-1"/>
    <property type="match status" value="1"/>
</dbReference>
<dbReference type="NCBIfam" id="NF000986">
    <property type="entry name" value="PRK00103.1-4"/>
    <property type="match status" value="1"/>
</dbReference>
<dbReference type="NCBIfam" id="TIGR00246">
    <property type="entry name" value="tRNA_RlmH_YbeA"/>
    <property type="match status" value="1"/>
</dbReference>
<dbReference type="PANTHER" id="PTHR33603">
    <property type="entry name" value="METHYLTRANSFERASE"/>
    <property type="match status" value="1"/>
</dbReference>
<dbReference type="PANTHER" id="PTHR33603:SF1">
    <property type="entry name" value="RIBOSOMAL RNA LARGE SUBUNIT METHYLTRANSFERASE H"/>
    <property type="match status" value="1"/>
</dbReference>
<dbReference type="Pfam" id="PF02590">
    <property type="entry name" value="SPOUT_MTase"/>
    <property type="match status" value="1"/>
</dbReference>
<dbReference type="PIRSF" id="PIRSF004505">
    <property type="entry name" value="MT_bac"/>
    <property type="match status" value="1"/>
</dbReference>
<dbReference type="SUPFAM" id="SSF75217">
    <property type="entry name" value="alpha/beta knot"/>
    <property type="match status" value="1"/>
</dbReference>
<proteinExistence type="inferred from homology"/>
<protein>
    <recommendedName>
        <fullName evidence="1">Ribosomal RNA large subunit methyltransferase H</fullName>
        <ecNumber evidence="1">2.1.1.177</ecNumber>
    </recommendedName>
    <alternativeName>
        <fullName evidence="1">23S rRNA (pseudouridine1915-N3)-methyltransferase</fullName>
    </alternativeName>
    <alternativeName>
        <fullName evidence="1">23S rRNA m3Psi1915 methyltransferase</fullName>
    </alternativeName>
    <alternativeName>
        <fullName evidence="1">rRNA (pseudouridine-N3-)-methyltransferase RlmH</fullName>
    </alternativeName>
</protein>
<sequence>MKLQLVAVGTKMPDWVQTGFTEYLRRFPKDMPFELIEIPAGKRGKNADIKRILDKEGEQMLAAAGKNRIVTLDIPGKPWDTPQLAAELERWKLDGRDVSLLIGGPEGLSPACKAAAEQSWSLSALTLPHPLVRVLVAESLYRAWSITTNHPYHRE</sequence>
<organism>
    <name type="scientific">Shigella boydii serotype 4 (strain Sb227)</name>
    <dbReference type="NCBI Taxonomy" id="300268"/>
    <lineage>
        <taxon>Bacteria</taxon>
        <taxon>Pseudomonadati</taxon>
        <taxon>Pseudomonadota</taxon>
        <taxon>Gammaproteobacteria</taxon>
        <taxon>Enterobacterales</taxon>
        <taxon>Enterobacteriaceae</taxon>
        <taxon>Shigella</taxon>
    </lineage>
</organism>
<name>RLMH_SHIBS</name>
<evidence type="ECO:0000255" key="1">
    <source>
        <dbReference type="HAMAP-Rule" id="MF_00658"/>
    </source>
</evidence>